<evidence type="ECO:0000255" key="1">
    <source>
        <dbReference type="HAMAP-Rule" id="MF_00741"/>
    </source>
</evidence>
<sequence>MSTPTQLSYKDAGVDIDAGNALVDNIKSAVKRTHRPEVMGNLGGFGALCELPTKYKHPVLVSGTDGVGTKLRLAIDYQKHDSVGVDLVAMCVNDLIVAGAEPLFFLDYYATGKLDVATATSVVNGIAEGCAQSGCALIGGETAEMPGMYEGEDYDLAGFCVGVVEKEDVLDGSKVVAGDALIALGSSGPHSNGYSLIRKVLEVSKADPQQDLEGKPLIDHLLEPTKIYVKPLLKLLEKHDIHAMAHITGGGFWENIPRVLPNDAKAVVKGDSWQWPTVFNWLMENGNIAEFEMYRTFNCGVGMIIALPQDQVDAALTLLKAEGENAWLIGDIASRNGDEEQVEIC</sequence>
<comment type="catalytic activity">
    <reaction evidence="1">
        <text>2-formamido-N(1)-(5-O-phospho-beta-D-ribosyl)acetamidine + ATP = 5-amino-1-(5-phospho-beta-D-ribosyl)imidazole + ADP + phosphate + H(+)</text>
        <dbReference type="Rhea" id="RHEA:23032"/>
        <dbReference type="ChEBI" id="CHEBI:15378"/>
        <dbReference type="ChEBI" id="CHEBI:30616"/>
        <dbReference type="ChEBI" id="CHEBI:43474"/>
        <dbReference type="ChEBI" id="CHEBI:137981"/>
        <dbReference type="ChEBI" id="CHEBI:147287"/>
        <dbReference type="ChEBI" id="CHEBI:456216"/>
        <dbReference type="EC" id="6.3.3.1"/>
    </reaction>
</comment>
<comment type="pathway">
    <text evidence="1">Purine metabolism; IMP biosynthesis via de novo pathway; 5-amino-1-(5-phospho-D-ribosyl)imidazole from N(2)-formyl-N(1)-(5-phospho-D-ribosyl)glycinamide: step 2/2.</text>
</comment>
<comment type="subcellular location">
    <subcellularLocation>
        <location evidence="1">Cytoplasm</location>
    </subcellularLocation>
</comment>
<comment type="similarity">
    <text evidence="1">Belongs to the AIR synthase family.</text>
</comment>
<protein>
    <recommendedName>
        <fullName evidence="1">Phosphoribosylformylglycinamidine cyclo-ligase</fullName>
        <ecNumber evidence="1">6.3.3.1</ecNumber>
    </recommendedName>
    <alternativeName>
        <fullName evidence="1">AIR synthase</fullName>
    </alternativeName>
    <alternativeName>
        <fullName evidence="1">AIRS</fullName>
    </alternativeName>
    <alternativeName>
        <fullName evidence="1">Phosphoribosyl-aminoimidazole synthetase</fullName>
    </alternativeName>
</protein>
<dbReference type="EC" id="6.3.3.1" evidence="1"/>
<dbReference type="EMBL" id="CP000606">
    <property type="protein sequence ID" value="ABO23380.1"/>
    <property type="molecule type" value="Genomic_DNA"/>
</dbReference>
<dbReference type="RefSeq" id="WP_011865312.1">
    <property type="nucleotide sequence ID" value="NC_009092.1"/>
</dbReference>
<dbReference type="SMR" id="A3QD32"/>
<dbReference type="STRING" id="323850.Shew_1513"/>
<dbReference type="KEGG" id="slo:Shew_1513"/>
<dbReference type="eggNOG" id="COG0150">
    <property type="taxonomic scope" value="Bacteria"/>
</dbReference>
<dbReference type="HOGENOM" id="CLU_047116_0_0_6"/>
<dbReference type="OrthoDB" id="9777881at2"/>
<dbReference type="UniPathway" id="UPA00074">
    <property type="reaction ID" value="UER00129"/>
</dbReference>
<dbReference type="Proteomes" id="UP000001558">
    <property type="component" value="Chromosome"/>
</dbReference>
<dbReference type="GO" id="GO:0005829">
    <property type="term" value="C:cytosol"/>
    <property type="evidence" value="ECO:0007669"/>
    <property type="project" value="TreeGrafter"/>
</dbReference>
<dbReference type="GO" id="GO:0005524">
    <property type="term" value="F:ATP binding"/>
    <property type="evidence" value="ECO:0007669"/>
    <property type="project" value="UniProtKB-KW"/>
</dbReference>
<dbReference type="GO" id="GO:0004637">
    <property type="term" value="F:phosphoribosylamine-glycine ligase activity"/>
    <property type="evidence" value="ECO:0007669"/>
    <property type="project" value="TreeGrafter"/>
</dbReference>
<dbReference type="GO" id="GO:0004641">
    <property type="term" value="F:phosphoribosylformylglycinamidine cyclo-ligase activity"/>
    <property type="evidence" value="ECO:0007669"/>
    <property type="project" value="UniProtKB-UniRule"/>
</dbReference>
<dbReference type="GO" id="GO:0006189">
    <property type="term" value="P:'de novo' IMP biosynthetic process"/>
    <property type="evidence" value="ECO:0007669"/>
    <property type="project" value="UniProtKB-UniRule"/>
</dbReference>
<dbReference type="GO" id="GO:0046084">
    <property type="term" value="P:adenine biosynthetic process"/>
    <property type="evidence" value="ECO:0007669"/>
    <property type="project" value="TreeGrafter"/>
</dbReference>
<dbReference type="CDD" id="cd02196">
    <property type="entry name" value="PurM"/>
    <property type="match status" value="1"/>
</dbReference>
<dbReference type="FunFam" id="3.30.1330.10:FF:000001">
    <property type="entry name" value="Phosphoribosylformylglycinamidine cyclo-ligase"/>
    <property type="match status" value="1"/>
</dbReference>
<dbReference type="FunFam" id="3.90.650.10:FF:000001">
    <property type="entry name" value="Phosphoribosylformylglycinamidine cyclo-ligase"/>
    <property type="match status" value="1"/>
</dbReference>
<dbReference type="Gene3D" id="3.90.650.10">
    <property type="entry name" value="PurM-like C-terminal domain"/>
    <property type="match status" value="1"/>
</dbReference>
<dbReference type="Gene3D" id="3.30.1330.10">
    <property type="entry name" value="PurM-like, N-terminal domain"/>
    <property type="match status" value="1"/>
</dbReference>
<dbReference type="HAMAP" id="MF_00741">
    <property type="entry name" value="AIRS"/>
    <property type="match status" value="1"/>
</dbReference>
<dbReference type="InterPro" id="IPR010918">
    <property type="entry name" value="PurM-like_C_dom"/>
</dbReference>
<dbReference type="InterPro" id="IPR036676">
    <property type="entry name" value="PurM-like_C_sf"/>
</dbReference>
<dbReference type="InterPro" id="IPR016188">
    <property type="entry name" value="PurM-like_N"/>
</dbReference>
<dbReference type="InterPro" id="IPR036921">
    <property type="entry name" value="PurM-like_N_sf"/>
</dbReference>
<dbReference type="InterPro" id="IPR004733">
    <property type="entry name" value="PurM_cligase"/>
</dbReference>
<dbReference type="NCBIfam" id="TIGR00878">
    <property type="entry name" value="purM"/>
    <property type="match status" value="1"/>
</dbReference>
<dbReference type="PANTHER" id="PTHR10520:SF12">
    <property type="entry name" value="TRIFUNCTIONAL PURINE BIOSYNTHETIC PROTEIN ADENOSINE-3"/>
    <property type="match status" value="1"/>
</dbReference>
<dbReference type="PANTHER" id="PTHR10520">
    <property type="entry name" value="TRIFUNCTIONAL PURINE BIOSYNTHETIC PROTEIN ADENOSINE-3-RELATED"/>
    <property type="match status" value="1"/>
</dbReference>
<dbReference type="Pfam" id="PF00586">
    <property type="entry name" value="AIRS"/>
    <property type="match status" value="1"/>
</dbReference>
<dbReference type="Pfam" id="PF02769">
    <property type="entry name" value="AIRS_C"/>
    <property type="match status" value="1"/>
</dbReference>
<dbReference type="SUPFAM" id="SSF56042">
    <property type="entry name" value="PurM C-terminal domain-like"/>
    <property type="match status" value="1"/>
</dbReference>
<dbReference type="SUPFAM" id="SSF55326">
    <property type="entry name" value="PurM N-terminal domain-like"/>
    <property type="match status" value="1"/>
</dbReference>
<gene>
    <name evidence="1" type="primary">purM</name>
    <name type="ordered locus">Shew_1513</name>
</gene>
<accession>A3QD32</accession>
<reference key="1">
    <citation type="submission" date="2007-03" db="EMBL/GenBank/DDBJ databases">
        <title>Complete sequence of Shewanella loihica PV-4.</title>
        <authorList>
            <consortium name="US DOE Joint Genome Institute"/>
            <person name="Copeland A."/>
            <person name="Lucas S."/>
            <person name="Lapidus A."/>
            <person name="Barry K."/>
            <person name="Detter J.C."/>
            <person name="Glavina del Rio T."/>
            <person name="Hammon N."/>
            <person name="Israni S."/>
            <person name="Dalin E."/>
            <person name="Tice H."/>
            <person name="Pitluck S."/>
            <person name="Chain P."/>
            <person name="Malfatti S."/>
            <person name="Shin M."/>
            <person name="Vergez L."/>
            <person name="Schmutz J."/>
            <person name="Larimer F."/>
            <person name="Land M."/>
            <person name="Hauser L."/>
            <person name="Kyrpides N."/>
            <person name="Mikhailova N."/>
            <person name="Romine M.F."/>
            <person name="Serres G."/>
            <person name="Fredrickson J."/>
            <person name="Tiedje J."/>
            <person name="Richardson P."/>
        </authorList>
    </citation>
    <scope>NUCLEOTIDE SEQUENCE [LARGE SCALE GENOMIC DNA]</scope>
    <source>
        <strain>ATCC BAA-1088 / PV-4</strain>
    </source>
</reference>
<organism>
    <name type="scientific">Shewanella loihica (strain ATCC BAA-1088 / PV-4)</name>
    <dbReference type="NCBI Taxonomy" id="323850"/>
    <lineage>
        <taxon>Bacteria</taxon>
        <taxon>Pseudomonadati</taxon>
        <taxon>Pseudomonadota</taxon>
        <taxon>Gammaproteobacteria</taxon>
        <taxon>Alteromonadales</taxon>
        <taxon>Shewanellaceae</taxon>
        <taxon>Shewanella</taxon>
    </lineage>
</organism>
<keyword id="KW-0067">ATP-binding</keyword>
<keyword id="KW-0963">Cytoplasm</keyword>
<keyword id="KW-0436">Ligase</keyword>
<keyword id="KW-0547">Nucleotide-binding</keyword>
<keyword id="KW-0658">Purine biosynthesis</keyword>
<keyword id="KW-1185">Reference proteome</keyword>
<feature type="chain" id="PRO_1000062166" description="Phosphoribosylformylglycinamidine cyclo-ligase">
    <location>
        <begin position="1"/>
        <end position="345"/>
    </location>
</feature>
<proteinExistence type="inferred from homology"/>
<name>PUR5_SHELP</name>